<gene>
    <name evidence="1" type="primary">argC</name>
    <name type="ordered locus">STM4121</name>
</gene>
<feature type="chain" id="PRO_0000112444" description="N-acetyl-gamma-glutamyl-phosphate reductase">
    <location>
        <begin position="1"/>
        <end position="334"/>
    </location>
</feature>
<feature type="active site" evidence="1">
    <location>
        <position position="154"/>
    </location>
</feature>
<feature type="strand" evidence="2">
    <location>
        <begin position="2"/>
        <end position="7"/>
    </location>
</feature>
<feature type="turn" evidence="2">
    <location>
        <begin position="8"/>
        <end position="10"/>
    </location>
</feature>
<feature type="helix" evidence="2">
    <location>
        <begin position="12"/>
        <end position="23"/>
    </location>
</feature>
<feature type="strand" evidence="2">
    <location>
        <begin position="27"/>
        <end position="35"/>
    </location>
</feature>
<feature type="turn" evidence="2">
    <location>
        <begin position="39"/>
        <end position="42"/>
    </location>
</feature>
<feature type="helix" evidence="2">
    <location>
        <begin position="45"/>
        <end position="48"/>
    </location>
</feature>
<feature type="helix" evidence="2">
    <location>
        <begin position="50"/>
        <end position="52"/>
    </location>
</feature>
<feature type="turn" evidence="2">
    <location>
        <begin position="53"/>
        <end position="55"/>
    </location>
</feature>
<feature type="strand" evidence="2">
    <location>
        <begin position="59"/>
        <end position="64"/>
    </location>
</feature>
<feature type="helix" evidence="2">
    <location>
        <begin position="66"/>
        <end position="68"/>
    </location>
</feature>
<feature type="strand" evidence="2">
    <location>
        <begin position="75"/>
        <end position="78"/>
    </location>
</feature>
<feature type="helix" evidence="2">
    <location>
        <begin position="82"/>
        <end position="94"/>
    </location>
</feature>
<feature type="strand" evidence="2">
    <location>
        <begin position="98"/>
        <end position="101"/>
    </location>
</feature>
<feature type="strand" evidence="2">
    <location>
        <begin position="107"/>
        <end position="109"/>
    </location>
</feature>
<feature type="helix" evidence="2">
    <location>
        <begin position="111"/>
        <end position="118"/>
    </location>
</feature>
<feature type="helix" evidence="2">
    <location>
        <begin position="125"/>
        <end position="130"/>
    </location>
</feature>
<feature type="helix" evidence="2">
    <location>
        <begin position="136"/>
        <end position="138"/>
    </location>
</feature>
<feature type="helix" evidence="2">
    <location>
        <begin position="140"/>
        <end position="143"/>
    </location>
</feature>
<feature type="strand" evidence="2">
    <location>
        <begin position="147"/>
        <end position="150"/>
    </location>
</feature>
<feature type="helix" evidence="2">
    <location>
        <begin position="154"/>
        <end position="168"/>
    </location>
</feature>
<feature type="strand" evidence="2">
    <location>
        <begin position="179"/>
        <end position="184"/>
    </location>
</feature>
<feature type="helix" evidence="2">
    <location>
        <begin position="186"/>
        <end position="189"/>
    </location>
</feature>
<feature type="helix" evidence="2">
    <location>
        <begin position="199"/>
        <end position="201"/>
    </location>
</feature>
<feature type="strand" evidence="2">
    <location>
        <begin position="203"/>
        <end position="206"/>
    </location>
</feature>
<feature type="turn" evidence="2">
    <location>
        <begin position="209"/>
        <end position="211"/>
    </location>
</feature>
<feature type="helix" evidence="2">
    <location>
        <begin position="214"/>
        <end position="222"/>
    </location>
</feature>
<feature type="strand" evidence="2">
    <location>
        <begin position="227"/>
        <end position="237"/>
    </location>
</feature>
<feature type="strand" evidence="2">
    <location>
        <begin position="239"/>
        <end position="247"/>
    </location>
</feature>
<feature type="helix" evidence="2">
    <location>
        <begin position="253"/>
        <end position="264"/>
    </location>
</feature>
<feature type="strand" evidence="2">
    <location>
        <begin position="270"/>
        <end position="272"/>
    </location>
</feature>
<feature type="strand" evidence="2">
    <location>
        <begin position="274"/>
        <end position="276"/>
    </location>
</feature>
<feature type="helix" evidence="2">
    <location>
        <begin position="280"/>
        <end position="282"/>
    </location>
</feature>
<feature type="turn" evidence="2">
    <location>
        <begin position="283"/>
        <end position="285"/>
    </location>
</feature>
<feature type="strand" evidence="2">
    <location>
        <begin position="289"/>
        <end position="296"/>
    </location>
</feature>
<feature type="strand" evidence="2">
    <location>
        <begin position="299"/>
        <end position="306"/>
    </location>
</feature>
<feature type="turn" evidence="2">
    <location>
        <begin position="308"/>
        <end position="313"/>
    </location>
</feature>
<feature type="helix" evidence="2">
    <location>
        <begin position="314"/>
        <end position="325"/>
    </location>
</feature>
<feature type="turn" evidence="2">
    <location>
        <begin position="329"/>
        <end position="333"/>
    </location>
</feature>
<comment type="function">
    <text evidence="1">Catalyzes the NADPH-dependent reduction of N-acetyl-5-glutamyl phosphate to yield N-acetyl-L-glutamate 5-semialdehyde.</text>
</comment>
<comment type="catalytic activity">
    <reaction evidence="1">
        <text>N-acetyl-L-glutamate 5-semialdehyde + phosphate + NADP(+) = N-acetyl-L-glutamyl 5-phosphate + NADPH + H(+)</text>
        <dbReference type="Rhea" id="RHEA:21588"/>
        <dbReference type="ChEBI" id="CHEBI:15378"/>
        <dbReference type="ChEBI" id="CHEBI:29123"/>
        <dbReference type="ChEBI" id="CHEBI:43474"/>
        <dbReference type="ChEBI" id="CHEBI:57783"/>
        <dbReference type="ChEBI" id="CHEBI:57936"/>
        <dbReference type="ChEBI" id="CHEBI:58349"/>
        <dbReference type="EC" id="1.2.1.38"/>
    </reaction>
</comment>
<comment type="pathway">
    <text evidence="1">Amino-acid biosynthesis; L-arginine biosynthesis; N(2)-acetyl-L-ornithine from L-glutamate: step 3/4.</text>
</comment>
<comment type="subcellular location">
    <subcellularLocation>
        <location evidence="1">Cytoplasm</location>
    </subcellularLocation>
</comment>
<comment type="similarity">
    <text evidence="1">Belongs to the NAGSA dehydrogenase family. Type 1 subfamily.</text>
</comment>
<organism>
    <name type="scientific">Salmonella typhimurium (strain LT2 / SGSC1412 / ATCC 700720)</name>
    <dbReference type="NCBI Taxonomy" id="99287"/>
    <lineage>
        <taxon>Bacteria</taxon>
        <taxon>Pseudomonadati</taxon>
        <taxon>Pseudomonadota</taxon>
        <taxon>Gammaproteobacteria</taxon>
        <taxon>Enterobacterales</taxon>
        <taxon>Enterobacteriaceae</taxon>
        <taxon>Salmonella</taxon>
    </lineage>
</organism>
<keyword id="KW-0002">3D-structure</keyword>
<keyword id="KW-0028">Amino-acid biosynthesis</keyword>
<keyword id="KW-0055">Arginine biosynthesis</keyword>
<keyword id="KW-0963">Cytoplasm</keyword>
<keyword id="KW-0521">NADP</keyword>
<keyword id="KW-0560">Oxidoreductase</keyword>
<keyword id="KW-1185">Reference proteome</keyword>
<proteinExistence type="evidence at protein level"/>
<accession>Q8ZKL8</accession>
<dbReference type="EC" id="1.2.1.38" evidence="1"/>
<dbReference type="EMBL" id="AE006468">
    <property type="protein sequence ID" value="AAL22960.1"/>
    <property type="molecule type" value="Genomic_DNA"/>
</dbReference>
<dbReference type="RefSeq" id="NP_463001.1">
    <property type="nucleotide sequence ID" value="NC_003197.2"/>
</dbReference>
<dbReference type="RefSeq" id="WP_000935340.1">
    <property type="nucleotide sequence ID" value="NC_003197.2"/>
</dbReference>
<dbReference type="PDB" id="2G17">
    <property type="method" value="X-ray"/>
    <property type="resolution" value="2.30 A"/>
    <property type="chains" value="A=1-334"/>
</dbReference>
<dbReference type="PDBsum" id="2G17"/>
<dbReference type="SMR" id="Q8ZKL8"/>
<dbReference type="STRING" id="99287.STM4121"/>
<dbReference type="PaxDb" id="99287-STM4121"/>
<dbReference type="DNASU" id="1255648"/>
<dbReference type="GeneID" id="1255648"/>
<dbReference type="KEGG" id="stm:STM4121"/>
<dbReference type="PATRIC" id="fig|99287.12.peg.4343"/>
<dbReference type="HOGENOM" id="CLU_006384_0_1_6"/>
<dbReference type="OMA" id="PHLTPMI"/>
<dbReference type="PhylomeDB" id="Q8ZKL8"/>
<dbReference type="BioCyc" id="SENT99287:STM4121-MONOMER"/>
<dbReference type="UniPathway" id="UPA00068">
    <property type="reaction ID" value="UER00108"/>
</dbReference>
<dbReference type="EvolutionaryTrace" id="Q8ZKL8"/>
<dbReference type="Proteomes" id="UP000001014">
    <property type="component" value="Chromosome"/>
</dbReference>
<dbReference type="GO" id="GO:0005737">
    <property type="term" value="C:cytoplasm"/>
    <property type="evidence" value="ECO:0007669"/>
    <property type="project" value="UniProtKB-SubCell"/>
</dbReference>
<dbReference type="GO" id="GO:0003942">
    <property type="term" value="F:N-acetyl-gamma-glutamyl-phosphate reductase activity"/>
    <property type="evidence" value="ECO:0007669"/>
    <property type="project" value="UniProtKB-UniRule"/>
</dbReference>
<dbReference type="GO" id="GO:0051287">
    <property type="term" value="F:NAD binding"/>
    <property type="evidence" value="ECO:0007669"/>
    <property type="project" value="InterPro"/>
</dbReference>
<dbReference type="GO" id="GO:0070401">
    <property type="term" value="F:NADP+ binding"/>
    <property type="evidence" value="ECO:0007669"/>
    <property type="project" value="InterPro"/>
</dbReference>
<dbReference type="GO" id="GO:0006526">
    <property type="term" value="P:L-arginine biosynthetic process"/>
    <property type="evidence" value="ECO:0007669"/>
    <property type="project" value="UniProtKB-UniRule"/>
</dbReference>
<dbReference type="CDD" id="cd23934">
    <property type="entry name" value="AGPR_1_C"/>
    <property type="match status" value="1"/>
</dbReference>
<dbReference type="CDD" id="cd17895">
    <property type="entry name" value="AGPR_1_N"/>
    <property type="match status" value="1"/>
</dbReference>
<dbReference type="FunFam" id="3.30.360.10:FF:000014">
    <property type="entry name" value="N-acetyl-gamma-glutamyl-phosphate reductase"/>
    <property type="match status" value="1"/>
</dbReference>
<dbReference type="FunFam" id="3.40.50.720:FF:000117">
    <property type="entry name" value="N-acetyl-gamma-glutamyl-phosphate reductase"/>
    <property type="match status" value="1"/>
</dbReference>
<dbReference type="Gene3D" id="3.30.360.10">
    <property type="entry name" value="Dihydrodipicolinate Reductase, domain 2"/>
    <property type="match status" value="1"/>
</dbReference>
<dbReference type="Gene3D" id="3.40.50.720">
    <property type="entry name" value="NAD(P)-binding Rossmann-like Domain"/>
    <property type="match status" value="1"/>
</dbReference>
<dbReference type="HAMAP" id="MF_00150">
    <property type="entry name" value="ArgC_type1"/>
    <property type="match status" value="1"/>
</dbReference>
<dbReference type="InterPro" id="IPR023013">
    <property type="entry name" value="AGPR_AS"/>
</dbReference>
<dbReference type="InterPro" id="IPR000706">
    <property type="entry name" value="AGPR_type-1"/>
</dbReference>
<dbReference type="InterPro" id="IPR036291">
    <property type="entry name" value="NAD(P)-bd_dom_sf"/>
</dbReference>
<dbReference type="InterPro" id="IPR050085">
    <property type="entry name" value="NAGSA_dehydrogenase"/>
</dbReference>
<dbReference type="InterPro" id="IPR000534">
    <property type="entry name" value="Semialdehyde_DH_NAD-bd"/>
</dbReference>
<dbReference type="NCBIfam" id="TIGR01850">
    <property type="entry name" value="argC"/>
    <property type="match status" value="1"/>
</dbReference>
<dbReference type="PANTHER" id="PTHR32338:SF10">
    <property type="entry name" value="N-ACETYL-GAMMA-GLUTAMYL-PHOSPHATE REDUCTASE, CHLOROPLASTIC-RELATED"/>
    <property type="match status" value="1"/>
</dbReference>
<dbReference type="PANTHER" id="PTHR32338">
    <property type="entry name" value="N-ACETYL-GAMMA-GLUTAMYL-PHOSPHATE REDUCTASE, CHLOROPLASTIC-RELATED-RELATED"/>
    <property type="match status" value="1"/>
</dbReference>
<dbReference type="Pfam" id="PF01118">
    <property type="entry name" value="Semialdhyde_dh"/>
    <property type="match status" value="1"/>
</dbReference>
<dbReference type="Pfam" id="PF22698">
    <property type="entry name" value="Semialdhyde_dhC_1"/>
    <property type="match status" value="1"/>
</dbReference>
<dbReference type="SMART" id="SM00859">
    <property type="entry name" value="Semialdhyde_dh"/>
    <property type="match status" value="1"/>
</dbReference>
<dbReference type="SUPFAM" id="SSF55347">
    <property type="entry name" value="Glyceraldehyde-3-phosphate dehydrogenase-like, C-terminal domain"/>
    <property type="match status" value="1"/>
</dbReference>
<dbReference type="SUPFAM" id="SSF51735">
    <property type="entry name" value="NAD(P)-binding Rossmann-fold domains"/>
    <property type="match status" value="1"/>
</dbReference>
<dbReference type="PROSITE" id="PS01224">
    <property type="entry name" value="ARGC"/>
    <property type="match status" value="1"/>
</dbReference>
<evidence type="ECO:0000255" key="1">
    <source>
        <dbReference type="HAMAP-Rule" id="MF_00150"/>
    </source>
</evidence>
<evidence type="ECO:0007829" key="2">
    <source>
        <dbReference type="PDB" id="2G17"/>
    </source>
</evidence>
<reference key="1">
    <citation type="journal article" date="2001" name="Nature">
        <title>Complete genome sequence of Salmonella enterica serovar Typhimurium LT2.</title>
        <authorList>
            <person name="McClelland M."/>
            <person name="Sanderson K.E."/>
            <person name="Spieth J."/>
            <person name="Clifton S.W."/>
            <person name="Latreille P."/>
            <person name="Courtney L."/>
            <person name="Porwollik S."/>
            <person name="Ali J."/>
            <person name="Dante M."/>
            <person name="Du F."/>
            <person name="Hou S."/>
            <person name="Layman D."/>
            <person name="Leonard S."/>
            <person name="Nguyen C."/>
            <person name="Scott K."/>
            <person name="Holmes A."/>
            <person name="Grewal N."/>
            <person name="Mulvaney E."/>
            <person name="Ryan E."/>
            <person name="Sun H."/>
            <person name="Florea L."/>
            <person name="Miller W."/>
            <person name="Stoneking T."/>
            <person name="Nhan M."/>
            <person name="Waterston R."/>
            <person name="Wilson R.K."/>
        </authorList>
    </citation>
    <scope>NUCLEOTIDE SEQUENCE [LARGE SCALE GENOMIC DNA]</scope>
    <source>
        <strain>LT2 / SGSC1412 / ATCC 700720</strain>
    </source>
</reference>
<protein>
    <recommendedName>
        <fullName evidence="1">N-acetyl-gamma-glutamyl-phosphate reductase</fullName>
        <shortName evidence="1">AGPR</shortName>
        <ecNumber evidence="1">1.2.1.38</ecNumber>
    </recommendedName>
    <alternativeName>
        <fullName evidence="1">N-acetyl-glutamate semialdehyde dehydrogenase</fullName>
        <shortName evidence="1">NAGSA dehydrogenase</shortName>
    </alternativeName>
</protein>
<sequence length="334" mass="35949">MLNTLIVGASGYAGAELVSYVNRHPHMTITALTVSAQSNDAGKLISDLHPQLKGIVDLPLQPMSDVRDFSADVDVVFLATAHEVSHDLAPQFLQAGCVVFDLSGAFRVNDRAFYEKYYGFTHQYPELLEQAVYGLAEWNVDKLNTANLIAVPGCYPTAAQLSLKPLIDGGLLDLTQWPVINATSGVSGAGRKAAISNSFCEVSLQPYGVFTHRHQPEIAVHLGAEVIFTPHLGNFPRGILETITCRLKAGVTHAQVADVLQKAYGDKPLVRLYDKGVPALKNVVGLPFCDIGFAVQGEHLIVVATEDNLLKGAAAQAVQCANIRFGFAETQSLI</sequence>
<name>ARGC_SALTY</name>